<name>HTMR_MYCTU</name>
<proteinExistence type="evidence at protein level"/>
<organism>
    <name type="scientific">Mycobacterium tuberculosis (strain ATCC 25618 / H37Rv)</name>
    <dbReference type="NCBI Taxonomy" id="83332"/>
    <lineage>
        <taxon>Bacteria</taxon>
        <taxon>Bacillati</taxon>
        <taxon>Actinomycetota</taxon>
        <taxon>Actinomycetes</taxon>
        <taxon>Mycobacteriales</taxon>
        <taxon>Mycobacteriaceae</taxon>
        <taxon>Mycobacterium</taxon>
        <taxon>Mycobacterium tuberculosis complex</taxon>
    </lineage>
</organism>
<accession>P9WME9</accession>
<accession>L0TCJ1</accession>
<accession>P67747</accession>
<accession>Q10810</accession>
<comment type="function">
    <text evidence="2 3 4">Represses expression of the HQNO methyltransferase htm gene (Rv0560c) by binding to its promoter region (PubMed:26303802, PubMed:27432954, PubMed:28743871). Also represses the expression of at least five other genes, including the methyltransferase Rv0558 (PubMed:26303802). Binds salicylate (SA), para-aminosalicylic acid (PAS) and gemfibrozil (PubMed:28743871).</text>
</comment>
<comment type="activity regulation">
    <text evidence="4">Binding of effector molecule SA, or its structural analog PAS, to the binding pocket of Rv2887 induces conformational change in its DNA binding domain, preventing binding to the promoter region of htm, triggering the expression of this SAM-dependent methyltransferase.</text>
</comment>
<comment type="subunit">
    <text evidence="4">Homodimer.</text>
</comment>
<comment type="domain">
    <text evidence="4">Conformational changes take place in the N-terminal and the winged-HTH (wHTH) domain on ligand or DNA binding. SA and PAS stabilize a conformation of Rv2887 incompatible with DNA binding. Rotation of the N-terminal plays a key role in the dimerization.</text>
</comment>
<comment type="disruption phenotype">
    <text evidence="2 3">Mutation of the gene leads to derepression and increased expression of htm (PubMed:27432954). Inactivation of the gene confers resistance to the imidazo[1,2-a]pyridine-4-carbonitrile-based agent MP-III-71, an effective antimycobacterial compound that shows no cross-resistance to existing antituberculosis drugs (PubMed:26303802).</text>
</comment>
<dbReference type="EMBL" id="AL123456">
    <property type="protein sequence ID" value="CCP45689.1"/>
    <property type="molecule type" value="Genomic_DNA"/>
</dbReference>
<dbReference type="PIR" id="B70925">
    <property type="entry name" value="B70925"/>
</dbReference>
<dbReference type="RefSeq" id="NP_217403.1">
    <property type="nucleotide sequence ID" value="NC_000962.3"/>
</dbReference>
<dbReference type="RefSeq" id="WP_003899525.1">
    <property type="nucleotide sequence ID" value="NZ_NVQJ01000006.1"/>
</dbReference>
<dbReference type="PDB" id="5HSM">
    <property type="method" value="X-ray"/>
    <property type="resolution" value="1.90 A"/>
    <property type="chains" value="A=1-139"/>
</dbReference>
<dbReference type="PDB" id="5HSO">
    <property type="method" value="X-ray"/>
    <property type="resolution" value="2.50 A"/>
    <property type="chains" value="A/B/C/D=1-139"/>
</dbReference>
<dbReference type="PDB" id="5X7Z">
    <property type="method" value="X-ray"/>
    <property type="resolution" value="2.20 A"/>
    <property type="chains" value="A=1-139"/>
</dbReference>
<dbReference type="PDB" id="5X80">
    <property type="method" value="X-ray"/>
    <property type="resolution" value="2.40 A"/>
    <property type="chains" value="A/B/C/D=1-139"/>
</dbReference>
<dbReference type="PDBsum" id="5HSM"/>
<dbReference type="PDBsum" id="5HSO"/>
<dbReference type="PDBsum" id="5X7Z"/>
<dbReference type="PDBsum" id="5X80"/>
<dbReference type="SMR" id="P9WME9"/>
<dbReference type="FunCoup" id="P9WME9">
    <property type="interactions" value="3"/>
</dbReference>
<dbReference type="STRING" id="83332.Rv2887"/>
<dbReference type="PaxDb" id="83332-Rv2887"/>
<dbReference type="DNASU" id="888563"/>
<dbReference type="GeneID" id="888563"/>
<dbReference type="KEGG" id="mtu:Rv2887"/>
<dbReference type="KEGG" id="mtv:RVBD_2887"/>
<dbReference type="TubercuList" id="Rv2887"/>
<dbReference type="eggNOG" id="COG1846">
    <property type="taxonomic scope" value="Bacteria"/>
</dbReference>
<dbReference type="InParanoid" id="P9WME9"/>
<dbReference type="OrthoDB" id="3177763at2"/>
<dbReference type="PhylomeDB" id="P9WME9"/>
<dbReference type="Proteomes" id="UP000001584">
    <property type="component" value="Chromosome"/>
</dbReference>
<dbReference type="GO" id="GO:0003677">
    <property type="term" value="F:DNA binding"/>
    <property type="evidence" value="ECO:0007669"/>
    <property type="project" value="UniProtKB-KW"/>
</dbReference>
<dbReference type="GO" id="GO:0003700">
    <property type="term" value="F:DNA-binding transcription factor activity"/>
    <property type="evidence" value="ECO:0007669"/>
    <property type="project" value="InterPro"/>
</dbReference>
<dbReference type="GO" id="GO:0006355">
    <property type="term" value="P:regulation of DNA-templated transcription"/>
    <property type="evidence" value="ECO:0000318"/>
    <property type="project" value="GO_Central"/>
</dbReference>
<dbReference type="GO" id="GO:0006950">
    <property type="term" value="P:response to stress"/>
    <property type="evidence" value="ECO:0000318"/>
    <property type="project" value="GO_Central"/>
</dbReference>
<dbReference type="Gene3D" id="1.10.10.10">
    <property type="entry name" value="Winged helix-like DNA-binding domain superfamily/Winged helix DNA-binding domain"/>
    <property type="match status" value="1"/>
</dbReference>
<dbReference type="InterPro" id="IPR000835">
    <property type="entry name" value="HTH_MarR-typ"/>
</dbReference>
<dbReference type="InterPro" id="IPR039422">
    <property type="entry name" value="MarR/SlyA-like"/>
</dbReference>
<dbReference type="InterPro" id="IPR023187">
    <property type="entry name" value="Tscrpt_reg_MarR-type_CS"/>
</dbReference>
<dbReference type="InterPro" id="IPR036388">
    <property type="entry name" value="WH-like_DNA-bd_sf"/>
</dbReference>
<dbReference type="InterPro" id="IPR036390">
    <property type="entry name" value="WH_DNA-bd_sf"/>
</dbReference>
<dbReference type="PANTHER" id="PTHR33164:SF43">
    <property type="entry name" value="HTH-TYPE TRANSCRIPTIONAL REPRESSOR YETL"/>
    <property type="match status" value="1"/>
</dbReference>
<dbReference type="PANTHER" id="PTHR33164">
    <property type="entry name" value="TRANSCRIPTIONAL REGULATOR, MARR FAMILY"/>
    <property type="match status" value="1"/>
</dbReference>
<dbReference type="Pfam" id="PF01047">
    <property type="entry name" value="MarR"/>
    <property type="match status" value="1"/>
</dbReference>
<dbReference type="PRINTS" id="PR00598">
    <property type="entry name" value="HTHMARR"/>
</dbReference>
<dbReference type="SMART" id="SM00347">
    <property type="entry name" value="HTH_MARR"/>
    <property type="match status" value="1"/>
</dbReference>
<dbReference type="SUPFAM" id="SSF46785">
    <property type="entry name" value="Winged helix' DNA-binding domain"/>
    <property type="match status" value="1"/>
</dbReference>
<dbReference type="PROSITE" id="PS01117">
    <property type="entry name" value="HTH_MARR_1"/>
    <property type="match status" value="1"/>
</dbReference>
<dbReference type="PROSITE" id="PS50995">
    <property type="entry name" value="HTH_MARR_2"/>
    <property type="match status" value="1"/>
</dbReference>
<feature type="chain" id="PRO_0000054410" description="HTH-type transcriptional repressor Rv2887">
    <location>
        <begin position="1"/>
        <end position="139"/>
    </location>
</feature>
<feature type="domain" description="HTH marR-type" evidence="1">
    <location>
        <begin position="6"/>
        <end position="138"/>
    </location>
</feature>
<feature type="binding site" evidence="4">
    <location>
        <position position="42"/>
    </location>
    <ligand>
        <name>salicylate</name>
        <dbReference type="ChEBI" id="CHEBI:30762"/>
    </ligand>
</feature>
<feature type="binding site" evidence="4">
    <location>
        <position position="114"/>
    </location>
    <ligand>
        <name>salicylate</name>
        <dbReference type="ChEBI" id="CHEBI:30762"/>
    </ligand>
</feature>
<feature type="mutagenesis site" description="Attenuates the ability to bind salicylate." evidence="4">
    <original>R</original>
    <variation>A</variation>
    <location>
        <position position="42"/>
    </location>
</feature>
<feature type="mutagenesis site" description="Abolishes binding to Rv0560c promoter." evidence="3">
    <original>R</original>
    <variation>Q</variation>
    <location>
        <position position="81"/>
    </location>
</feature>
<feature type="mutagenesis site" description="Attenuates the ability to bind salicylate." evidence="4">
    <original>D</original>
    <variation>A</variation>
    <location>
        <position position="114"/>
    </location>
</feature>
<feature type="turn" evidence="10">
    <location>
        <begin position="2"/>
        <end position="4"/>
    </location>
</feature>
<feature type="helix" evidence="10">
    <location>
        <begin position="8"/>
        <end position="28"/>
    </location>
</feature>
<feature type="helix" evidence="10">
    <location>
        <begin position="29"/>
        <end position="31"/>
    </location>
</feature>
<feature type="helix" evidence="10">
    <location>
        <begin position="35"/>
        <end position="46"/>
    </location>
</feature>
<feature type="strand" evidence="11">
    <location>
        <begin position="47"/>
        <end position="49"/>
    </location>
</feature>
<feature type="helix" evidence="10">
    <location>
        <begin position="52"/>
        <end position="58"/>
    </location>
</feature>
<feature type="helix" evidence="10">
    <location>
        <begin position="63"/>
        <end position="75"/>
    </location>
</feature>
<feature type="strand" evidence="11">
    <location>
        <begin position="78"/>
        <end position="80"/>
    </location>
</feature>
<feature type="strand" evidence="12">
    <location>
        <begin position="85"/>
        <end position="88"/>
    </location>
</feature>
<feature type="helix" evidence="10">
    <location>
        <begin position="97"/>
        <end position="118"/>
    </location>
</feature>
<feature type="helix" evidence="10">
    <location>
        <begin position="123"/>
        <end position="136"/>
    </location>
</feature>
<evidence type="ECO:0000255" key="1">
    <source>
        <dbReference type="PROSITE-ProRule" id="PRU00345"/>
    </source>
</evidence>
<evidence type="ECO:0000269" key="2">
    <source>
    </source>
</evidence>
<evidence type="ECO:0000269" key="3">
    <source>
    </source>
</evidence>
<evidence type="ECO:0000269" key="4">
    <source>
    </source>
</evidence>
<evidence type="ECO:0000305" key="5"/>
<evidence type="ECO:0007744" key="6">
    <source>
        <dbReference type="PDB" id="5HSM"/>
    </source>
</evidence>
<evidence type="ECO:0007744" key="7">
    <source>
        <dbReference type="PDB" id="5HSO"/>
    </source>
</evidence>
<evidence type="ECO:0007744" key="8">
    <source>
        <dbReference type="PDB" id="5X7Z"/>
    </source>
</evidence>
<evidence type="ECO:0007744" key="9">
    <source>
        <dbReference type="PDB" id="5X80"/>
    </source>
</evidence>
<evidence type="ECO:0007829" key="10">
    <source>
        <dbReference type="PDB" id="5HSM"/>
    </source>
</evidence>
<evidence type="ECO:0007829" key="11">
    <source>
        <dbReference type="PDB" id="5X7Z"/>
    </source>
</evidence>
<evidence type="ECO:0007829" key="12">
    <source>
        <dbReference type="PDB" id="5X80"/>
    </source>
</evidence>
<reference key="1">
    <citation type="journal article" date="1998" name="Nature">
        <title>Deciphering the biology of Mycobacterium tuberculosis from the complete genome sequence.</title>
        <authorList>
            <person name="Cole S.T."/>
            <person name="Brosch R."/>
            <person name="Parkhill J."/>
            <person name="Garnier T."/>
            <person name="Churcher C.M."/>
            <person name="Harris D.E."/>
            <person name="Gordon S.V."/>
            <person name="Eiglmeier K."/>
            <person name="Gas S."/>
            <person name="Barry C.E. III"/>
            <person name="Tekaia F."/>
            <person name="Badcock K."/>
            <person name="Basham D."/>
            <person name="Brown D."/>
            <person name="Chillingworth T."/>
            <person name="Connor R."/>
            <person name="Davies R.M."/>
            <person name="Devlin K."/>
            <person name="Feltwell T."/>
            <person name="Gentles S."/>
            <person name="Hamlin N."/>
            <person name="Holroyd S."/>
            <person name="Hornsby T."/>
            <person name="Jagels K."/>
            <person name="Krogh A."/>
            <person name="McLean J."/>
            <person name="Moule S."/>
            <person name="Murphy L.D."/>
            <person name="Oliver S."/>
            <person name="Osborne J."/>
            <person name="Quail M.A."/>
            <person name="Rajandream M.A."/>
            <person name="Rogers J."/>
            <person name="Rutter S."/>
            <person name="Seeger K."/>
            <person name="Skelton S."/>
            <person name="Squares S."/>
            <person name="Squares R."/>
            <person name="Sulston J.E."/>
            <person name="Taylor K."/>
            <person name="Whitehead S."/>
            <person name="Barrell B.G."/>
        </authorList>
    </citation>
    <scope>NUCLEOTIDE SEQUENCE [LARGE SCALE GENOMIC DNA]</scope>
    <source>
        <strain>ATCC 25618 / H37Rv</strain>
    </source>
</reference>
<reference key="2">
    <citation type="journal article" date="2011" name="Mol. Cell. Proteomics">
        <title>Proteogenomic analysis of Mycobacterium tuberculosis by high resolution mass spectrometry.</title>
        <authorList>
            <person name="Kelkar D.S."/>
            <person name="Kumar D."/>
            <person name="Kumar P."/>
            <person name="Balakrishnan L."/>
            <person name="Muthusamy B."/>
            <person name="Yadav A.K."/>
            <person name="Shrivastava P."/>
            <person name="Marimuthu A."/>
            <person name="Anand S."/>
            <person name="Sundaram H."/>
            <person name="Kingsbury R."/>
            <person name="Harsha H.C."/>
            <person name="Nair B."/>
            <person name="Prasad T.S."/>
            <person name="Chauhan D.S."/>
            <person name="Katoch K."/>
            <person name="Katoch V.M."/>
            <person name="Kumar P."/>
            <person name="Chaerkady R."/>
            <person name="Ramachandran S."/>
            <person name="Dash D."/>
            <person name="Pandey A."/>
        </authorList>
    </citation>
    <scope>IDENTIFICATION BY MASS SPECTROMETRY [LARGE SCALE ANALYSIS]</scope>
    <source>
        <strain>ATCC 25618 / H37Rv</strain>
    </source>
</reference>
<reference key="3">
    <citation type="journal article" date="2015" name="Antimicrob. Agents Chemother.">
        <title>Mutation of Rv2887, a marR-like gene, confers Mycobacterium tuberculosis resistance to an imidazopyridine-based agent.</title>
        <authorList>
            <person name="Winglee K."/>
            <person name="Lun S."/>
            <person name="Pieroni M."/>
            <person name="Kozikowski A."/>
            <person name="Bishai W."/>
        </authorList>
    </citation>
    <scope>FUNCTION</scope>
    <scope>DISRUPTION PHENOTYPE</scope>
    <source>
        <strain>H37Rv</strain>
    </source>
</reference>
<reference key="4">
    <citation type="journal article" date="2016" name="Proc. Natl. Acad. Sci. U.S.A.">
        <title>N-methylation of a bactericidal compound as a resistance mechanism in Mycobacterium tuberculosis.</title>
        <authorList>
            <person name="Warrier T."/>
            <person name="Kapilashrami K."/>
            <person name="Argyrou A."/>
            <person name="Ioerger T.R."/>
            <person name="Little D."/>
            <person name="Murphy K.C."/>
            <person name="Nandakumar M."/>
            <person name="Park S."/>
            <person name="Gold B."/>
            <person name="Mi J."/>
            <person name="Zhang T."/>
            <person name="Meiler E."/>
            <person name="Rees M."/>
            <person name="Somersan-Karakaya S."/>
            <person name="Porras-De Francisco E."/>
            <person name="Martinez-Hoyos M."/>
            <person name="Burns-Huang K."/>
            <person name="Roberts J."/>
            <person name="Ling Y."/>
            <person name="Rhee K.Y."/>
            <person name="Mendoza-Losana A."/>
            <person name="Luo M."/>
            <person name="Nathan C.F."/>
        </authorList>
    </citation>
    <scope>FUNCTION</scope>
    <scope>DNA-BINDING</scope>
    <scope>DISRUPTION PHENOTYPE</scope>
    <scope>MUTAGENESIS OF ARG-81</scope>
    <source>
        <strain>H37Rv</strain>
    </source>
</reference>
<reference evidence="6 7 8 9" key="5">
    <citation type="journal article" date="2017" name="Sci. Rep.">
        <title>Structural analysis of the regulatory mechanism of MarR protein Rv2887 in M. tuberculosis.</title>
        <authorList>
            <person name="Gao Y.R."/>
            <person name="Li D.F."/>
            <person name="Fleming J."/>
            <person name="Zhou Y.F."/>
            <person name="Liu Y."/>
            <person name="Deng J.Y."/>
            <person name="Zhou L."/>
            <person name="Zhou J."/>
            <person name="Zhu G.F."/>
            <person name="Zhang X.E."/>
            <person name="Wang D.C."/>
            <person name="Bi L.J."/>
        </authorList>
    </citation>
    <scope>X-RAY CRYSTALLOGRAPHY (1.90 ANGSTROMS) OF APOPROTEIN AND IN COMPLEXES WITH DNA; P-AMINOSALICYLIC ACID AND SALICYLIC ACID</scope>
    <scope>FUNCTION</scope>
    <scope>ACTIVITY REGULATION</scope>
    <scope>SUBUNIT</scope>
    <scope>DOMAIN</scope>
    <scope>MUTAGENESIS OF ARG-42 AND ASP-114</scope>
    <source>
        <strain>H37Rv</strain>
    </source>
</reference>
<sequence length="139" mass="14690">MGLADDAPLGYLLYRVGAVLRPEVSAALSPLGLTLPEFVCLRMLSQSPGLSSAELARHASVTPQAMNTVLRKLEDAGAVARPASVSSGRSLPATLTARGRALAKRAEAVVRAADARVLARLTAPQQREFKRMLEKLGSD</sequence>
<gene>
    <name type="ordered locus">Rv2887</name>
    <name type="ORF">MTCY274.18</name>
</gene>
<protein>
    <recommendedName>
        <fullName evidence="5">HTH-type transcriptional repressor Rv2887</fullName>
    </recommendedName>
</protein>
<keyword id="KW-0002">3D-structure</keyword>
<keyword id="KW-0238">DNA-binding</keyword>
<keyword id="KW-1185">Reference proteome</keyword>
<keyword id="KW-0678">Repressor</keyword>
<keyword id="KW-0804">Transcription</keyword>
<keyword id="KW-0805">Transcription regulation</keyword>